<gene>
    <name evidence="1" type="primary">kdsB</name>
    <name type="ordered locus">Rpal_4216</name>
</gene>
<evidence type="ECO:0000255" key="1">
    <source>
        <dbReference type="HAMAP-Rule" id="MF_00057"/>
    </source>
</evidence>
<comment type="function">
    <text evidence="1">Activates KDO (a required 8-carbon sugar) for incorporation into bacterial lipopolysaccharide in Gram-negative bacteria.</text>
</comment>
<comment type="catalytic activity">
    <reaction evidence="1">
        <text>3-deoxy-alpha-D-manno-oct-2-ulosonate + CTP = CMP-3-deoxy-beta-D-manno-octulosonate + diphosphate</text>
        <dbReference type="Rhea" id="RHEA:23448"/>
        <dbReference type="ChEBI" id="CHEBI:33019"/>
        <dbReference type="ChEBI" id="CHEBI:37563"/>
        <dbReference type="ChEBI" id="CHEBI:85986"/>
        <dbReference type="ChEBI" id="CHEBI:85987"/>
        <dbReference type="EC" id="2.7.7.38"/>
    </reaction>
</comment>
<comment type="pathway">
    <text evidence="1">Nucleotide-sugar biosynthesis; CMP-3-deoxy-D-manno-octulosonate biosynthesis; CMP-3-deoxy-D-manno-octulosonate from 3-deoxy-D-manno-octulosonate and CTP: step 1/1.</text>
</comment>
<comment type="pathway">
    <text evidence="1">Bacterial outer membrane biogenesis; lipopolysaccharide biosynthesis.</text>
</comment>
<comment type="subcellular location">
    <subcellularLocation>
        <location evidence="1">Cytoplasm</location>
    </subcellularLocation>
</comment>
<comment type="similarity">
    <text evidence="1">Belongs to the KdsB family.</text>
</comment>
<keyword id="KW-0963">Cytoplasm</keyword>
<keyword id="KW-0448">Lipopolysaccharide biosynthesis</keyword>
<keyword id="KW-0548">Nucleotidyltransferase</keyword>
<keyword id="KW-0808">Transferase</keyword>
<proteinExistence type="inferred from homology"/>
<name>KDSB_RHOPT</name>
<accession>B3QGN5</accession>
<reference key="1">
    <citation type="submission" date="2008-05" db="EMBL/GenBank/DDBJ databases">
        <title>Complete sequence of Rhodopseudomonas palustris TIE-1.</title>
        <authorList>
            <consortium name="US DOE Joint Genome Institute"/>
            <person name="Lucas S."/>
            <person name="Copeland A."/>
            <person name="Lapidus A."/>
            <person name="Glavina del Rio T."/>
            <person name="Dalin E."/>
            <person name="Tice H."/>
            <person name="Pitluck S."/>
            <person name="Chain P."/>
            <person name="Malfatti S."/>
            <person name="Shin M."/>
            <person name="Vergez L."/>
            <person name="Lang D."/>
            <person name="Schmutz J."/>
            <person name="Larimer F."/>
            <person name="Land M."/>
            <person name="Hauser L."/>
            <person name="Kyrpides N."/>
            <person name="Mikhailova N."/>
            <person name="Emerson D."/>
            <person name="Newman D.K."/>
            <person name="Roden E."/>
            <person name="Richardson P."/>
        </authorList>
    </citation>
    <scope>NUCLEOTIDE SEQUENCE [LARGE SCALE GENOMIC DNA]</scope>
    <source>
        <strain>TIE-1</strain>
    </source>
</reference>
<dbReference type="EC" id="2.7.7.38" evidence="1"/>
<dbReference type="EMBL" id="CP001096">
    <property type="protein sequence ID" value="ACF02712.1"/>
    <property type="molecule type" value="Genomic_DNA"/>
</dbReference>
<dbReference type="RefSeq" id="WP_012497098.1">
    <property type="nucleotide sequence ID" value="NC_011004.1"/>
</dbReference>
<dbReference type="SMR" id="B3QGN5"/>
<dbReference type="KEGG" id="rpt:Rpal_4216"/>
<dbReference type="HOGENOM" id="CLU_065038_0_1_5"/>
<dbReference type="OrthoDB" id="9815559at2"/>
<dbReference type="UniPathway" id="UPA00030"/>
<dbReference type="UniPathway" id="UPA00358">
    <property type="reaction ID" value="UER00476"/>
</dbReference>
<dbReference type="Proteomes" id="UP000001725">
    <property type="component" value="Chromosome"/>
</dbReference>
<dbReference type="GO" id="GO:0005829">
    <property type="term" value="C:cytosol"/>
    <property type="evidence" value="ECO:0007669"/>
    <property type="project" value="TreeGrafter"/>
</dbReference>
<dbReference type="GO" id="GO:0008690">
    <property type="term" value="F:3-deoxy-manno-octulosonate cytidylyltransferase activity"/>
    <property type="evidence" value="ECO:0007669"/>
    <property type="project" value="UniProtKB-UniRule"/>
</dbReference>
<dbReference type="GO" id="GO:0033468">
    <property type="term" value="P:CMP-keto-3-deoxy-D-manno-octulosonic acid biosynthetic process"/>
    <property type="evidence" value="ECO:0007669"/>
    <property type="project" value="UniProtKB-UniRule"/>
</dbReference>
<dbReference type="GO" id="GO:0009103">
    <property type="term" value="P:lipopolysaccharide biosynthetic process"/>
    <property type="evidence" value="ECO:0007669"/>
    <property type="project" value="UniProtKB-UniRule"/>
</dbReference>
<dbReference type="CDD" id="cd02517">
    <property type="entry name" value="CMP-KDO-Synthetase"/>
    <property type="match status" value="1"/>
</dbReference>
<dbReference type="Gene3D" id="3.90.550.10">
    <property type="entry name" value="Spore Coat Polysaccharide Biosynthesis Protein SpsA, Chain A"/>
    <property type="match status" value="1"/>
</dbReference>
<dbReference type="HAMAP" id="MF_00057">
    <property type="entry name" value="KdsB"/>
    <property type="match status" value="1"/>
</dbReference>
<dbReference type="InterPro" id="IPR003329">
    <property type="entry name" value="Cytidylyl_trans"/>
</dbReference>
<dbReference type="InterPro" id="IPR004528">
    <property type="entry name" value="KdsB"/>
</dbReference>
<dbReference type="InterPro" id="IPR029044">
    <property type="entry name" value="Nucleotide-diphossugar_trans"/>
</dbReference>
<dbReference type="NCBIfam" id="TIGR00466">
    <property type="entry name" value="kdsB"/>
    <property type="match status" value="1"/>
</dbReference>
<dbReference type="NCBIfam" id="NF003948">
    <property type="entry name" value="PRK05450.1-1"/>
    <property type="match status" value="1"/>
</dbReference>
<dbReference type="NCBIfam" id="NF003952">
    <property type="entry name" value="PRK05450.1-5"/>
    <property type="match status" value="1"/>
</dbReference>
<dbReference type="PANTHER" id="PTHR42866">
    <property type="entry name" value="3-DEOXY-MANNO-OCTULOSONATE CYTIDYLYLTRANSFERASE"/>
    <property type="match status" value="1"/>
</dbReference>
<dbReference type="PANTHER" id="PTHR42866:SF2">
    <property type="entry name" value="3-DEOXY-MANNO-OCTULOSONATE CYTIDYLYLTRANSFERASE, MITOCHONDRIAL"/>
    <property type="match status" value="1"/>
</dbReference>
<dbReference type="Pfam" id="PF02348">
    <property type="entry name" value="CTP_transf_3"/>
    <property type="match status" value="1"/>
</dbReference>
<dbReference type="SUPFAM" id="SSF53448">
    <property type="entry name" value="Nucleotide-diphospho-sugar transferases"/>
    <property type="match status" value="1"/>
</dbReference>
<protein>
    <recommendedName>
        <fullName evidence="1">3-deoxy-manno-octulosonate cytidylyltransferase</fullName>
        <ecNumber evidence="1">2.7.7.38</ecNumber>
    </recommendedName>
    <alternativeName>
        <fullName evidence="1">CMP-2-keto-3-deoxyoctulosonic acid synthase</fullName>
        <shortName evidence="1">CKS</shortName>
        <shortName evidence="1">CMP-KDO synthase</shortName>
    </alternativeName>
</protein>
<organism>
    <name type="scientific">Rhodopseudomonas palustris (strain TIE-1)</name>
    <dbReference type="NCBI Taxonomy" id="395960"/>
    <lineage>
        <taxon>Bacteria</taxon>
        <taxon>Pseudomonadati</taxon>
        <taxon>Pseudomonadota</taxon>
        <taxon>Alphaproteobacteria</taxon>
        <taxon>Hyphomicrobiales</taxon>
        <taxon>Nitrobacteraceae</taxon>
        <taxon>Rhodopseudomonas</taxon>
    </lineage>
</organism>
<feature type="chain" id="PRO_0000370140" description="3-deoxy-manno-octulosonate cytidylyltransferase">
    <location>
        <begin position="1"/>
        <end position="245"/>
    </location>
</feature>
<sequence>MTSPATLVLIPARMAATRLPGKPLLDIAGLPMVVQVLRRAQAAEIGRVAVATDAPEIAAAVTAHGGEVVMTRADHPSGSDRIFEALQTLDPDRKIETVINLQGDFPTIRPEQIGAVLGPLADPAVDIATLAAEIHTEEEATNPNVVKVIGSPLAADRLRALYFTRATAPWGDGPRYHHIGLYGYRRAALERFVALPPSPLELREKLEQLRALEAGMRIDVGIVDTVPRGVDTPADLETARRVLGG</sequence>